<organism>
    <name type="scientific">Flavobacterium johnsoniae (strain ATCC 17061 / DSM 2064 / JCM 8514 / BCRC 14874 / CCUG 350202 / NBRC 14942 / NCIMB 11054 / UW101)</name>
    <name type="common">Cytophaga johnsonae</name>
    <dbReference type="NCBI Taxonomy" id="376686"/>
    <lineage>
        <taxon>Bacteria</taxon>
        <taxon>Pseudomonadati</taxon>
        <taxon>Bacteroidota</taxon>
        <taxon>Flavobacteriia</taxon>
        <taxon>Flavobacteriales</taxon>
        <taxon>Flavobacteriaceae</taxon>
        <taxon>Flavobacterium</taxon>
    </lineage>
</organism>
<accession>A5FMZ2</accession>
<gene>
    <name evidence="1" type="primary">rpmC</name>
    <name type="ordered locus">Fjoh_0389</name>
</gene>
<feature type="chain" id="PRO_1000079886" description="Large ribosomal subunit protein uL29">
    <location>
        <begin position="1"/>
        <end position="63"/>
    </location>
</feature>
<comment type="similarity">
    <text evidence="1">Belongs to the universal ribosomal protein uL29 family.</text>
</comment>
<keyword id="KW-0002">3D-structure</keyword>
<keyword id="KW-0687">Ribonucleoprotein</keyword>
<keyword id="KW-0689">Ribosomal protein</keyword>
<sequence length="63" mass="7175">MKQSEIKDLSAAELQEKLSQTKKVYADLKMAHAISPIANPLRIRSVRRTVARLATELTKRELQ</sequence>
<evidence type="ECO:0000255" key="1">
    <source>
        <dbReference type="HAMAP-Rule" id="MF_00374"/>
    </source>
</evidence>
<evidence type="ECO:0000305" key="2"/>
<dbReference type="EMBL" id="CP000685">
    <property type="protein sequence ID" value="ABQ03425.1"/>
    <property type="molecule type" value="Genomic_DNA"/>
</dbReference>
<dbReference type="RefSeq" id="WP_012022486.1">
    <property type="nucleotide sequence ID" value="NC_009441.1"/>
</dbReference>
<dbReference type="PDB" id="7JIL">
    <property type="method" value="EM"/>
    <property type="resolution" value="2.80 A"/>
    <property type="chains" value="Y=1-63"/>
</dbReference>
<dbReference type="PDBsum" id="7JIL"/>
<dbReference type="EMDB" id="EMD-22345"/>
<dbReference type="SMR" id="A5FMZ2"/>
<dbReference type="STRING" id="376686.Fjoh_0389"/>
<dbReference type="KEGG" id="fjo:Fjoh_0389"/>
<dbReference type="eggNOG" id="COG0255">
    <property type="taxonomic scope" value="Bacteria"/>
</dbReference>
<dbReference type="HOGENOM" id="CLU_158491_5_1_10"/>
<dbReference type="OrthoDB" id="5296761at2"/>
<dbReference type="Proteomes" id="UP000006694">
    <property type="component" value="Chromosome"/>
</dbReference>
<dbReference type="GO" id="GO:1990904">
    <property type="term" value="C:ribonucleoprotein complex"/>
    <property type="evidence" value="ECO:0007669"/>
    <property type="project" value="UniProtKB-KW"/>
</dbReference>
<dbReference type="GO" id="GO:0005840">
    <property type="term" value="C:ribosome"/>
    <property type="evidence" value="ECO:0007669"/>
    <property type="project" value="UniProtKB-KW"/>
</dbReference>
<dbReference type="GO" id="GO:0003735">
    <property type="term" value="F:structural constituent of ribosome"/>
    <property type="evidence" value="ECO:0007669"/>
    <property type="project" value="InterPro"/>
</dbReference>
<dbReference type="GO" id="GO:0006412">
    <property type="term" value="P:translation"/>
    <property type="evidence" value="ECO:0007669"/>
    <property type="project" value="UniProtKB-UniRule"/>
</dbReference>
<dbReference type="CDD" id="cd00427">
    <property type="entry name" value="Ribosomal_L29_HIP"/>
    <property type="match status" value="1"/>
</dbReference>
<dbReference type="Gene3D" id="1.10.287.310">
    <property type="match status" value="1"/>
</dbReference>
<dbReference type="HAMAP" id="MF_00374">
    <property type="entry name" value="Ribosomal_uL29"/>
    <property type="match status" value="1"/>
</dbReference>
<dbReference type="InterPro" id="IPR001854">
    <property type="entry name" value="Ribosomal_uL29"/>
</dbReference>
<dbReference type="InterPro" id="IPR018254">
    <property type="entry name" value="Ribosomal_uL29_CS"/>
</dbReference>
<dbReference type="InterPro" id="IPR036049">
    <property type="entry name" value="Ribosomal_uL29_sf"/>
</dbReference>
<dbReference type="NCBIfam" id="TIGR00012">
    <property type="entry name" value="L29"/>
    <property type="match status" value="1"/>
</dbReference>
<dbReference type="Pfam" id="PF00831">
    <property type="entry name" value="Ribosomal_L29"/>
    <property type="match status" value="1"/>
</dbReference>
<dbReference type="SUPFAM" id="SSF46561">
    <property type="entry name" value="Ribosomal protein L29 (L29p)"/>
    <property type="match status" value="1"/>
</dbReference>
<dbReference type="PROSITE" id="PS00579">
    <property type="entry name" value="RIBOSOMAL_L29"/>
    <property type="match status" value="1"/>
</dbReference>
<protein>
    <recommendedName>
        <fullName evidence="1">Large ribosomal subunit protein uL29</fullName>
    </recommendedName>
    <alternativeName>
        <fullName evidence="2">50S ribosomal protein L29</fullName>
    </alternativeName>
</protein>
<name>RL29_FLAJ1</name>
<reference key="1">
    <citation type="journal article" date="2009" name="Appl. Environ. Microbiol.">
        <title>Novel features of the polysaccharide-digesting gliding bacterium Flavobacterium johnsoniae as revealed by genome sequence analysis.</title>
        <authorList>
            <person name="McBride M.J."/>
            <person name="Xie G."/>
            <person name="Martens E.C."/>
            <person name="Lapidus A."/>
            <person name="Henrissat B."/>
            <person name="Rhodes R.G."/>
            <person name="Goltsman E."/>
            <person name="Wang W."/>
            <person name="Xu J."/>
            <person name="Hunnicutt D.W."/>
            <person name="Staroscik A.M."/>
            <person name="Hoover T.R."/>
            <person name="Cheng Y.Q."/>
            <person name="Stein J.L."/>
        </authorList>
    </citation>
    <scope>NUCLEOTIDE SEQUENCE [LARGE SCALE GENOMIC DNA]</scope>
    <source>
        <strain>ATCC 17061 / DSM 2064 / JCM 8514 / BCRC 14874 / CCUG 350202 / NBRC 14942 / NCIMB 11054 / UW101</strain>
    </source>
</reference>
<proteinExistence type="evidence at protein level"/>